<dbReference type="EMBL" id="AE002098">
    <property type="protein sequence ID" value="AAF42374.1"/>
    <property type="molecule type" value="Genomic_DNA"/>
</dbReference>
<dbReference type="PIR" id="G81011">
    <property type="entry name" value="G81011"/>
</dbReference>
<dbReference type="RefSeq" id="NP_275044.1">
    <property type="nucleotide sequence ID" value="NC_003112.2"/>
</dbReference>
<dbReference type="RefSeq" id="WP_002225699.1">
    <property type="nucleotide sequence ID" value="NC_003112.2"/>
</dbReference>
<dbReference type="SMR" id="Q9JXG9"/>
<dbReference type="FunCoup" id="Q9JXG9">
    <property type="interactions" value="200"/>
</dbReference>
<dbReference type="STRING" id="122586.NMB2054"/>
<dbReference type="PaxDb" id="122586-NMB2054"/>
<dbReference type="KEGG" id="nme:NMB2054"/>
<dbReference type="PATRIC" id="fig|122586.8.peg.2632"/>
<dbReference type="HOGENOM" id="CLU_037423_3_0_4"/>
<dbReference type="InParanoid" id="Q9JXG9"/>
<dbReference type="OrthoDB" id="9800881at2"/>
<dbReference type="Proteomes" id="UP000000425">
    <property type="component" value="Chromosome"/>
</dbReference>
<dbReference type="GO" id="GO:0005737">
    <property type="term" value="C:cytoplasm"/>
    <property type="evidence" value="ECO:0000318"/>
    <property type="project" value="GO_Central"/>
</dbReference>
<dbReference type="GO" id="GO:0046872">
    <property type="term" value="F:metal ion binding"/>
    <property type="evidence" value="ECO:0007669"/>
    <property type="project" value="UniProtKB-KW"/>
</dbReference>
<dbReference type="FunFam" id="3.40.1390.30:FF:000002">
    <property type="entry name" value="Nif3-like dinuclear metal center protein"/>
    <property type="match status" value="1"/>
</dbReference>
<dbReference type="Gene3D" id="3.40.1390.30">
    <property type="entry name" value="NIF3 (NGG1p interacting factor 3)-like"/>
    <property type="match status" value="2"/>
</dbReference>
<dbReference type="InterPro" id="IPR002678">
    <property type="entry name" value="DUF34/NIF3"/>
</dbReference>
<dbReference type="InterPro" id="IPR036069">
    <property type="entry name" value="DUF34/NIF3_sf"/>
</dbReference>
<dbReference type="NCBIfam" id="TIGR00486">
    <property type="entry name" value="YbgI_SA1388"/>
    <property type="match status" value="1"/>
</dbReference>
<dbReference type="PANTHER" id="PTHR13799:SF14">
    <property type="entry name" value="GTP CYCLOHYDROLASE 1 TYPE 2 HOMOLOG"/>
    <property type="match status" value="1"/>
</dbReference>
<dbReference type="PANTHER" id="PTHR13799">
    <property type="entry name" value="NGG1 INTERACTING FACTOR 3"/>
    <property type="match status" value="1"/>
</dbReference>
<dbReference type="Pfam" id="PF01784">
    <property type="entry name" value="DUF34_NIF3"/>
    <property type="match status" value="1"/>
</dbReference>
<dbReference type="SUPFAM" id="SSF102705">
    <property type="entry name" value="NIF3 (NGG1p interacting factor 3)-like"/>
    <property type="match status" value="1"/>
</dbReference>
<gene>
    <name type="ordered locus">NMB2054</name>
</gene>
<reference key="1">
    <citation type="journal article" date="2000" name="Science">
        <title>Complete genome sequence of Neisseria meningitidis serogroup B strain MC58.</title>
        <authorList>
            <person name="Tettelin H."/>
            <person name="Saunders N.J."/>
            <person name="Heidelberg J.F."/>
            <person name="Jeffries A.C."/>
            <person name="Nelson K.E."/>
            <person name="Eisen J.A."/>
            <person name="Ketchum K.A."/>
            <person name="Hood D.W."/>
            <person name="Peden J.F."/>
            <person name="Dodson R.J."/>
            <person name="Nelson W.C."/>
            <person name="Gwinn M.L."/>
            <person name="DeBoy R.T."/>
            <person name="Peterson J.D."/>
            <person name="Hickey E.K."/>
            <person name="Haft D.H."/>
            <person name="Salzberg S.L."/>
            <person name="White O."/>
            <person name="Fleischmann R.D."/>
            <person name="Dougherty B.A."/>
            <person name="Mason T.M."/>
            <person name="Ciecko A."/>
            <person name="Parksey D.S."/>
            <person name="Blair E."/>
            <person name="Cittone H."/>
            <person name="Clark E.B."/>
            <person name="Cotton M.D."/>
            <person name="Utterback T.R."/>
            <person name="Khouri H.M."/>
            <person name="Qin H."/>
            <person name="Vamathevan J.J."/>
            <person name="Gill J."/>
            <person name="Scarlato V."/>
            <person name="Masignani V."/>
            <person name="Pizza M."/>
            <person name="Grandi G."/>
            <person name="Sun L."/>
            <person name="Smith H.O."/>
            <person name="Fraser C.M."/>
            <person name="Moxon E.R."/>
            <person name="Rappuoli R."/>
            <person name="Venter J.C."/>
        </authorList>
    </citation>
    <scope>NUCLEOTIDE SEQUENCE [LARGE SCALE GENOMIC DNA]</scope>
    <source>
        <strain>ATCC BAA-335 / MC58</strain>
    </source>
</reference>
<proteinExistence type="inferred from homology"/>
<name>GCH1L_NEIMB</name>
<feature type="chain" id="PRO_0000147321" description="GTP cyclohydrolase 1 type 2 homolog">
    <location>
        <begin position="1"/>
        <end position="249"/>
    </location>
</feature>
<feature type="binding site" evidence="1">
    <location>
        <position position="64"/>
    </location>
    <ligand>
        <name>a divalent metal cation</name>
        <dbReference type="ChEBI" id="CHEBI:60240"/>
        <label>1</label>
    </ligand>
</feature>
<feature type="binding site" evidence="1">
    <location>
        <position position="65"/>
    </location>
    <ligand>
        <name>a divalent metal cation</name>
        <dbReference type="ChEBI" id="CHEBI:60240"/>
        <label>2</label>
    </ligand>
</feature>
<feature type="binding site" evidence="1">
    <location>
        <position position="102"/>
    </location>
    <ligand>
        <name>a divalent metal cation</name>
        <dbReference type="ChEBI" id="CHEBI:60240"/>
        <label>1</label>
    </ligand>
</feature>
<feature type="binding site" evidence="1">
    <location>
        <position position="217"/>
    </location>
    <ligand>
        <name>a divalent metal cation</name>
        <dbReference type="ChEBI" id="CHEBI:60240"/>
        <label>2</label>
    </ligand>
</feature>
<feature type="binding site" evidence="1">
    <location>
        <position position="221"/>
    </location>
    <ligand>
        <name>a divalent metal cation</name>
        <dbReference type="ChEBI" id="CHEBI:60240"/>
        <label>1</label>
    </ligand>
</feature>
<feature type="binding site" evidence="1">
    <location>
        <position position="221"/>
    </location>
    <ligand>
        <name>a divalent metal cation</name>
        <dbReference type="ChEBI" id="CHEBI:60240"/>
        <label>2</label>
    </ligand>
</feature>
<organism>
    <name type="scientific">Neisseria meningitidis serogroup B (strain ATCC BAA-335 / MC58)</name>
    <dbReference type="NCBI Taxonomy" id="122586"/>
    <lineage>
        <taxon>Bacteria</taxon>
        <taxon>Pseudomonadati</taxon>
        <taxon>Pseudomonadota</taxon>
        <taxon>Betaproteobacteria</taxon>
        <taxon>Neisseriales</taxon>
        <taxon>Neisseriaceae</taxon>
        <taxon>Neisseria</taxon>
    </lineage>
</organism>
<evidence type="ECO:0000250" key="1">
    <source>
        <dbReference type="UniProtKB" id="P0AFP6"/>
    </source>
</evidence>
<evidence type="ECO:0000305" key="2"/>
<keyword id="KW-0479">Metal-binding</keyword>
<keyword id="KW-1185">Reference proteome</keyword>
<comment type="subunit">
    <text evidence="1">Homohexamer.</text>
</comment>
<comment type="similarity">
    <text evidence="2">Belongs to the GTP cyclohydrolase I type 2/NIF3 family.</text>
</comment>
<sequence>MVLCRDFLTWCNETLQTALFKDYAPNGLQVEGREYIGKIVTSVTASRAAIDFAVEQKADLLLVHHGMFWKNELPTVTGWKKERIAALLRHDINMAGYHLPLDAHPTLGNNAQLADRLGFATEKRFGEQNLLNSGSLKQAKTLGALAAHIETVLQRKPVVIGNPEREIRRVAWCSGGAQGFFQTAIDEGVDLYLTGEISEAQYHLANETGTAFISAGHHATERYGVRALAESAAEVFGLEVCHFDENNPA</sequence>
<protein>
    <recommendedName>
        <fullName>GTP cyclohydrolase 1 type 2 homolog</fullName>
    </recommendedName>
</protein>
<accession>Q9JXG9</accession>